<organism>
    <name type="scientific">Yersinia pseudotuberculosis serotype IB (strain PB1/+)</name>
    <dbReference type="NCBI Taxonomy" id="502801"/>
    <lineage>
        <taxon>Bacteria</taxon>
        <taxon>Pseudomonadati</taxon>
        <taxon>Pseudomonadota</taxon>
        <taxon>Gammaproteobacteria</taxon>
        <taxon>Enterobacterales</taxon>
        <taxon>Yersiniaceae</taxon>
        <taxon>Yersinia</taxon>
    </lineage>
</organism>
<evidence type="ECO:0000255" key="1">
    <source>
        <dbReference type="HAMAP-Rule" id="MF_01341"/>
    </source>
</evidence>
<evidence type="ECO:0000256" key="2">
    <source>
        <dbReference type="SAM" id="MobiDB-lite"/>
    </source>
</evidence>
<evidence type="ECO:0000305" key="3"/>
<dbReference type="EMBL" id="CP001048">
    <property type="protein sequence ID" value="ACC90820.1"/>
    <property type="molecule type" value="Genomic_DNA"/>
</dbReference>
<dbReference type="RefSeq" id="WP_002213341.1">
    <property type="nucleotide sequence ID" value="NZ_CP009780.1"/>
</dbReference>
<dbReference type="SMR" id="B2K518"/>
<dbReference type="GeneID" id="96663177"/>
<dbReference type="KEGG" id="ypb:YPTS_3871"/>
<dbReference type="PATRIC" id="fig|502801.10.peg.3336"/>
<dbReference type="GO" id="GO:0022625">
    <property type="term" value="C:cytosolic large ribosomal subunit"/>
    <property type="evidence" value="ECO:0007669"/>
    <property type="project" value="TreeGrafter"/>
</dbReference>
<dbReference type="GO" id="GO:0019843">
    <property type="term" value="F:rRNA binding"/>
    <property type="evidence" value="ECO:0007669"/>
    <property type="project" value="UniProtKB-UniRule"/>
</dbReference>
<dbReference type="GO" id="GO:0003735">
    <property type="term" value="F:structural constituent of ribosome"/>
    <property type="evidence" value="ECO:0007669"/>
    <property type="project" value="InterPro"/>
</dbReference>
<dbReference type="GO" id="GO:0006412">
    <property type="term" value="P:translation"/>
    <property type="evidence" value="ECO:0007669"/>
    <property type="project" value="UniProtKB-UniRule"/>
</dbReference>
<dbReference type="FunFam" id="3.100.10.10:FF:000003">
    <property type="entry name" value="50S ribosomal protein L15"/>
    <property type="match status" value="1"/>
</dbReference>
<dbReference type="Gene3D" id="3.100.10.10">
    <property type="match status" value="1"/>
</dbReference>
<dbReference type="HAMAP" id="MF_01341">
    <property type="entry name" value="Ribosomal_uL15"/>
    <property type="match status" value="1"/>
</dbReference>
<dbReference type="InterPro" id="IPR030878">
    <property type="entry name" value="Ribosomal_uL15"/>
</dbReference>
<dbReference type="InterPro" id="IPR021131">
    <property type="entry name" value="Ribosomal_uL15/eL18"/>
</dbReference>
<dbReference type="InterPro" id="IPR036227">
    <property type="entry name" value="Ribosomal_uL15/eL18_sf"/>
</dbReference>
<dbReference type="InterPro" id="IPR005749">
    <property type="entry name" value="Ribosomal_uL15_bac-type"/>
</dbReference>
<dbReference type="InterPro" id="IPR001196">
    <property type="entry name" value="Ribosomal_uL15_CS"/>
</dbReference>
<dbReference type="NCBIfam" id="TIGR01071">
    <property type="entry name" value="rplO_bact"/>
    <property type="match status" value="1"/>
</dbReference>
<dbReference type="PANTHER" id="PTHR12934">
    <property type="entry name" value="50S RIBOSOMAL PROTEIN L15"/>
    <property type="match status" value="1"/>
</dbReference>
<dbReference type="PANTHER" id="PTHR12934:SF11">
    <property type="entry name" value="LARGE RIBOSOMAL SUBUNIT PROTEIN UL15M"/>
    <property type="match status" value="1"/>
</dbReference>
<dbReference type="Pfam" id="PF00828">
    <property type="entry name" value="Ribosomal_L27A"/>
    <property type="match status" value="1"/>
</dbReference>
<dbReference type="SUPFAM" id="SSF52080">
    <property type="entry name" value="Ribosomal proteins L15p and L18e"/>
    <property type="match status" value="1"/>
</dbReference>
<dbReference type="PROSITE" id="PS00475">
    <property type="entry name" value="RIBOSOMAL_L15"/>
    <property type="match status" value="1"/>
</dbReference>
<gene>
    <name evidence="1" type="primary">rplO</name>
    <name type="ordered locus">YPTS_3871</name>
</gene>
<accession>B2K518</accession>
<sequence length="144" mass="15207">MRLNTLSPAEGAKHAPKRVGRGIGSGLGKTAGRGHKGQNSRSGGGVRRGFEGGQMPLYRRLPKFGFTSRKAMITAEVRLSELALVEGDVIDLNTLKAANVVGIQMEFVKVILSGEVNRAVTLRGLRVTKGARAAIEAAGGKIEE</sequence>
<feature type="chain" id="PRO_1000142903" description="Large ribosomal subunit protein uL15">
    <location>
        <begin position="1"/>
        <end position="144"/>
    </location>
</feature>
<feature type="region of interest" description="Disordered" evidence="2">
    <location>
        <begin position="1"/>
        <end position="52"/>
    </location>
</feature>
<feature type="compositionally biased region" description="Gly residues" evidence="2">
    <location>
        <begin position="21"/>
        <end position="31"/>
    </location>
</feature>
<proteinExistence type="inferred from homology"/>
<keyword id="KW-0687">Ribonucleoprotein</keyword>
<keyword id="KW-0689">Ribosomal protein</keyword>
<keyword id="KW-0694">RNA-binding</keyword>
<keyword id="KW-0699">rRNA-binding</keyword>
<reference key="1">
    <citation type="submission" date="2008-04" db="EMBL/GenBank/DDBJ databases">
        <title>Complete sequence of Yersinia pseudotuberculosis PB1/+.</title>
        <authorList>
            <person name="Copeland A."/>
            <person name="Lucas S."/>
            <person name="Lapidus A."/>
            <person name="Glavina del Rio T."/>
            <person name="Dalin E."/>
            <person name="Tice H."/>
            <person name="Bruce D."/>
            <person name="Goodwin L."/>
            <person name="Pitluck S."/>
            <person name="Munk A.C."/>
            <person name="Brettin T."/>
            <person name="Detter J.C."/>
            <person name="Han C."/>
            <person name="Tapia R."/>
            <person name="Schmutz J."/>
            <person name="Larimer F."/>
            <person name="Land M."/>
            <person name="Hauser L."/>
            <person name="Challacombe J.F."/>
            <person name="Green L."/>
            <person name="Lindler L.E."/>
            <person name="Nikolich M.P."/>
            <person name="Richardson P."/>
        </authorList>
    </citation>
    <scope>NUCLEOTIDE SEQUENCE [LARGE SCALE GENOMIC DNA]</scope>
    <source>
        <strain>PB1/+</strain>
    </source>
</reference>
<name>RL15_YERPB</name>
<comment type="function">
    <text evidence="1">Binds to the 23S rRNA.</text>
</comment>
<comment type="subunit">
    <text evidence="1">Part of the 50S ribosomal subunit.</text>
</comment>
<comment type="similarity">
    <text evidence="1">Belongs to the universal ribosomal protein uL15 family.</text>
</comment>
<protein>
    <recommendedName>
        <fullName evidence="1">Large ribosomal subunit protein uL15</fullName>
    </recommendedName>
    <alternativeName>
        <fullName evidence="3">50S ribosomal protein L15</fullName>
    </alternativeName>
</protein>